<accession>P0CR27</accession>
<accession>Q560Z7</accession>
<accession>Q5KPZ8</accession>
<reference key="1">
    <citation type="journal article" date="2005" name="Science">
        <title>The genome of the basidiomycetous yeast and human pathogen Cryptococcus neoformans.</title>
        <authorList>
            <person name="Loftus B.J."/>
            <person name="Fung E."/>
            <person name="Roncaglia P."/>
            <person name="Rowley D."/>
            <person name="Amedeo P."/>
            <person name="Bruno D."/>
            <person name="Vamathevan J."/>
            <person name="Miranda M."/>
            <person name="Anderson I.J."/>
            <person name="Fraser J.A."/>
            <person name="Allen J.E."/>
            <person name="Bosdet I.E."/>
            <person name="Brent M.R."/>
            <person name="Chiu R."/>
            <person name="Doering T.L."/>
            <person name="Donlin M.J."/>
            <person name="D'Souza C.A."/>
            <person name="Fox D.S."/>
            <person name="Grinberg V."/>
            <person name="Fu J."/>
            <person name="Fukushima M."/>
            <person name="Haas B.J."/>
            <person name="Huang J.C."/>
            <person name="Janbon G."/>
            <person name="Jones S.J.M."/>
            <person name="Koo H.L."/>
            <person name="Krzywinski M.I."/>
            <person name="Kwon-Chung K.J."/>
            <person name="Lengeler K.B."/>
            <person name="Maiti R."/>
            <person name="Marra M.A."/>
            <person name="Marra R.E."/>
            <person name="Mathewson C.A."/>
            <person name="Mitchell T.G."/>
            <person name="Pertea M."/>
            <person name="Riggs F.R."/>
            <person name="Salzberg S.L."/>
            <person name="Schein J.E."/>
            <person name="Shvartsbeyn A."/>
            <person name="Shin H."/>
            <person name="Shumway M."/>
            <person name="Specht C.A."/>
            <person name="Suh B.B."/>
            <person name="Tenney A."/>
            <person name="Utterback T.R."/>
            <person name="Wickes B.L."/>
            <person name="Wortman J.R."/>
            <person name="Wye N.H."/>
            <person name="Kronstad J.W."/>
            <person name="Lodge J.K."/>
            <person name="Heitman J."/>
            <person name="Davis R.W."/>
            <person name="Fraser C.M."/>
            <person name="Hyman R.W."/>
        </authorList>
    </citation>
    <scope>NUCLEOTIDE SEQUENCE [LARGE SCALE GENOMIC DNA]</scope>
    <source>
        <strain>B-3501A</strain>
    </source>
</reference>
<organism>
    <name type="scientific">Cryptococcus neoformans var. neoformans serotype D (strain B-3501A)</name>
    <name type="common">Filobasidiella neoformans</name>
    <dbReference type="NCBI Taxonomy" id="283643"/>
    <lineage>
        <taxon>Eukaryota</taxon>
        <taxon>Fungi</taxon>
        <taxon>Dikarya</taxon>
        <taxon>Basidiomycota</taxon>
        <taxon>Agaricomycotina</taxon>
        <taxon>Tremellomycetes</taxon>
        <taxon>Tremellales</taxon>
        <taxon>Cryptococcaceae</taxon>
        <taxon>Cryptococcus</taxon>
        <taxon>Cryptococcus neoformans species complex</taxon>
    </lineage>
</organism>
<name>RUVB1_CRYNB</name>
<protein>
    <recommendedName>
        <fullName>RuvB-like helicase 1</fullName>
        <ecNumber>3.6.4.12</ecNumber>
    </recommendedName>
</protein>
<sequence>MSMAASSSTATVQPSGIITQPPPPSTLREQRIATHSHIKGLGLADDGTAMSSSQGFIGQILAREALGLHLSLLKGGKYSGRPLLLVGPPGTGKTALALALSQELGSKVPFCAMVGSEVYSGEVKKTEVLGSCFRRAIGLRIKETKEVYEGEVTELTPSEAENPLSGYGKTISHVIVGLKTVKGTKQLRLDPSVYESIQKERVVVGDVIYIEANTGAVKRVGRSDAYASEYDLEAEEYVPLPKGDVHKRKELVQDVTLHDLDMANARPQGGQDIMSVMGQLVKGGRTEVTDKLRREINKVVDRYIEQGVAELVPGVLFIDEVHMLDMECFTYLNRALESPMSPYVVLASNRGISTIRGTEYDGVAGSASEGIRAPHGLPVDLLDRCMIVKTQLYTRDEIRRIVEMRCKVEGIAISSEAVDKLADEGERSSLRYALQLLTPAGIVSKNKGKGEVGVADVEELGELFLDAKRSAGVLRSTEDFEKRY</sequence>
<evidence type="ECO:0000250" key="1"/>
<evidence type="ECO:0000256" key="2">
    <source>
        <dbReference type="SAM" id="MobiDB-lite"/>
    </source>
</evidence>
<evidence type="ECO:0000305" key="3"/>
<proteinExistence type="inferred from homology"/>
<feature type="chain" id="PRO_0000410275" description="RuvB-like helicase 1">
    <location>
        <begin position="1"/>
        <end position="484"/>
    </location>
</feature>
<feature type="region of interest" description="Disordered" evidence="2">
    <location>
        <begin position="1"/>
        <end position="27"/>
    </location>
</feature>
<feature type="compositionally biased region" description="Low complexity" evidence="2">
    <location>
        <begin position="1"/>
        <end position="11"/>
    </location>
</feature>
<feature type="binding site" evidence="1">
    <location>
        <begin position="87"/>
        <end position="94"/>
    </location>
    <ligand>
        <name>ATP</name>
        <dbReference type="ChEBI" id="CHEBI:30616"/>
    </ligand>
</feature>
<dbReference type="EC" id="3.6.4.12"/>
<dbReference type="EMBL" id="AAEY01000001">
    <property type="protein sequence ID" value="EAL23446.1"/>
    <property type="molecule type" value="Genomic_DNA"/>
</dbReference>
<dbReference type="RefSeq" id="XP_778093.1">
    <property type="nucleotide sequence ID" value="XM_773000.1"/>
</dbReference>
<dbReference type="SMR" id="P0CR27"/>
<dbReference type="EnsemblFungi" id="AAW40710">
    <property type="protein sequence ID" value="AAW40710"/>
    <property type="gene ID" value="CNA00990"/>
</dbReference>
<dbReference type="GeneID" id="4933347"/>
<dbReference type="KEGG" id="cnb:CNBA0960"/>
<dbReference type="VEuPathDB" id="FungiDB:CNBA0960"/>
<dbReference type="HOGENOM" id="CLU_028311_1_1_1"/>
<dbReference type="OrthoDB" id="2204at5206"/>
<dbReference type="GO" id="GO:0031011">
    <property type="term" value="C:Ino80 complex"/>
    <property type="evidence" value="ECO:0007669"/>
    <property type="project" value="EnsemblFungi"/>
</dbReference>
<dbReference type="GO" id="GO:0097255">
    <property type="term" value="C:R2TP complex"/>
    <property type="evidence" value="ECO:0007669"/>
    <property type="project" value="EnsemblFungi"/>
</dbReference>
<dbReference type="GO" id="GO:0000812">
    <property type="term" value="C:Swr1 complex"/>
    <property type="evidence" value="ECO:0007669"/>
    <property type="project" value="EnsemblFungi"/>
</dbReference>
<dbReference type="GO" id="GO:0043138">
    <property type="term" value="F:3'-5' DNA helicase activity"/>
    <property type="evidence" value="ECO:0007669"/>
    <property type="project" value="EnsemblFungi"/>
</dbReference>
<dbReference type="GO" id="GO:0043139">
    <property type="term" value="F:5'-3' DNA helicase activity"/>
    <property type="evidence" value="ECO:0007669"/>
    <property type="project" value="EnsemblFungi"/>
</dbReference>
<dbReference type="GO" id="GO:0005524">
    <property type="term" value="F:ATP binding"/>
    <property type="evidence" value="ECO:0007669"/>
    <property type="project" value="UniProtKB-KW"/>
</dbReference>
<dbReference type="GO" id="GO:0016887">
    <property type="term" value="F:ATP hydrolysis activity"/>
    <property type="evidence" value="ECO:0007669"/>
    <property type="project" value="InterPro"/>
</dbReference>
<dbReference type="GO" id="GO:0000492">
    <property type="term" value="P:box C/D snoRNP assembly"/>
    <property type="evidence" value="ECO:0007669"/>
    <property type="project" value="EnsemblFungi"/>
</dbReference>
<dbReference type="GO" id="GO:0006338">
    <property type="term" value="P:chromatin remodeling"/>
    <property type="evidence" value="ECO:0007669"/>
    <property type="project" value="EnsemblFungi"/>
</dbReference>
<dbReference type="GO" id="GO:0006281">
    <property type="term" value="P:DNA repair"/>
    <property type="evidence" value="ECO:0007669"/>
    <property type="project" value="UniProtKB-KW"/>
</dbReference>
<dbReference type="GO" id="GO:0006357">
    <property type="term" value="P:regulation of transcription by RNA polymerase II"/>
    <property type="evidence" value="ECO:0007669"/>
    <property type="project" value="EnsemblFungi"/>
</dbReference>
<dbReference type="CDD" id="cd00009">
    <property type="entry name" value="AAA"/>
    <property type="match status" value="1"/>
</dbReference>
<dbReference type="FunFam" id="1.10.8.60:FF:000010">
    <property type="entry name" value="RuvB-like helicase"/>
    <property type="match status" value="1"/>
</dbReference>
<dbReference type="FunFam" id="2.40.50.360:FF:000001">
    <property type="entry name" value="RuvB-like helicase"/>
    <property type="match status" value="1"/>
</dbReference>
<dbReference type="FunFam" id="3.40.50.300:FF:002334">
    <property type="entry name" value="RuvB-like helicase"/>
    <property type="match status" value="1"/>
</dbReference>
<dbReference type="Gene3D" id="1.10.8.60">
    <property type="match status" value="1"/>
</dbReference>
<dbReference type="Gene3D" id="3.40.50.300">
    <property type="entry name" value="P-loop containing nucleotide triphosphate hydrolases"/>
    <property type="match status" value="1"/>
</dbReference>
<dbReference type="Gene3D" id="2.40.50.360">
    <property type="entry name" value="RuvB-like helicase, domain II"/>
    <property type="match status" value="1"/>
</dbReference>
<dbReference type="InterPro" id="IPR003593">
    <property type="entry name" value="AAA+_ATPase"/>
</dbReference>
<dbReference type="InterPro" id="IPR027417">
    <property type="entry name" value="P-loop_NTPase"/>
</dbReference>
<dbReference type="InterPro" id="IPR027238">
    <property type="entry name" value="RuvB-like"/>
</dbReference>
<dbReference type="InterPro" id="IPR041048">
    <property type="entry name" value="RuvB-like_C"/>
</dbReference>
<dbReference type="InterPro" id="IPR042487">
    <property type="entry name" value="RuvBL1/2_DNA/RNA_bd_dom"/>
</dbReference>
<dbReference type="InterPro" id="IPR010339">
    <property type="entry name" value="TIP49_P-loop"/>
</dbReference>
<dbReference type="PANTHER" id="PTHR11093">
    <property type="entry name" value="RUVB-RELATED REPTIN AND PONTIN"/>
    <property type="match status" value="1"/>
</dbReference>
<dbReference type="Pfam" id="PF06068">
    <property type="entry name" value="TIP49"/>
    <property type="match status" value="1"/>
</dbReference>
<dbReference type="Pfam" id="PF17856">
    <property type="entry name" value="TIP49_C"/>
    <property type="match status" value="1"/>
</dbReference>
<dbReference type="SMART" id="SM00382">
    <property type="entry name" value="AAA"/>
    <property type="match status" value="1"/>
</dbReference>
<dbReference type="SUPFAM" id="SSF52540">
    <property type="entry name" value="P-loop containing nucleoside triphosphate hydrolases"/>
    <property type="match status" value="1"/>
</dbReference>
<comment type="function">
    <text evidence="1">DNA helicase which participates in several chromatin remodeling complexes, including the SWR1 and the INO80 complexes. The SWR1 complex mediates the ATP-dependent exchange of histone H2A for the H2A variant HZT1 leading to transcriptional regulation of selected genes by chromatin remodeling. The INO80 complex remodels chromatin by shifting nucleosomes and is involved in DNA repair. Also involved in pre-rRNA processing (By similarity).</text>
</comment>
<comment type="catalytic activity">
    <reaction>
        <text>ATP + H2O = ADP + phosphate + H(+)</text>
        <dbReference type="Rhea" id="RHEA:13065"/>
        <dbReference type="ChEBI" id="CHEBI:15377"/>
        <dbReference type="ChEBI" id="CHEBI:15378"/>
        <dbReference type="ChEBI" id="CHEBI:30616"/>
        <dbReference type="ChEBI" id="CHEBI:43474"/>
        <dbReference type="ChEBI" id="CHEBI:456216"/>
        <dbReference type="EC" id="3.6.4.12"/>
    </reaction>
</comment>
<comment type="subunit">
    <text evidence="1">May form heterododecamers with RVB2. Component of the SWR1 chromatin remodeling complex, the INO80 chromatin remodeling complex, and of the R2TP complex (By similarity).</text>
</comment>
<comment type="subcellular location">
    <subcellularLocation>
        <location evidence="1">Nucleus</location>
    </subcellularLocation>
</comment>
<comment type="similarity">
    <text evidence="3">Belongs to the RuvB family.</text>
</comment>
<keyword id="KW-0010">Activator</keyword>
<keyword id="KW-0067">ATP-binding</keyword>
<keyword id="KW-0156">Chromatin regulator</keyword>
<keyword id="KW-0227">DNA damage</keyword>
<keyword id="KW-0234">DNA repair</keyword>
<keyword id="KW-0347">Helicase</keyword>
<keyword id="KW-0378">Hydrolase</keyword>
<keyword id="KW-0547">Nucleotide-binding</keyword>
<keyword id="KW-0539">Nucleus</keyword>
<keyword id="KW-0804">Transcription</keyword>
<keyword id="KW-0805">Transcription regulation</keyword>
<gene>
    <name type="primary">RVB1</name>
    <name type="ordered locus">CNBA0960</name>
</gene>